<proteinExistence type="inferred from homology"/>
<name>IOLG4_SACEN</name>
<accession>A4FK61</accession>
<feature type="chain" id="PRO_0000352593" description="Inositol 2-dehydrogenase 4">
    <location>
        <begin position="1"/>
        <end position="338"/>
    </location>
</feature>
<protein>
    <recommendedName>
        <fullName evidence="1">Inositol 2-dehydrogenase 4</fullName>
        <ecNumber evidence="1">1.1.1.18</ecNumber>
    </recommendedName>
    <alternativeName>
        <fullName evidence="1">Myo-inositol 2-dehydrogenase 4</fullName>
        <shortName evidence="1">MI 2-dehydrogenase 4</shortName>
    </alternativeName>
</protein>
<evidence type="ECO:0000255" key="1">
    <source>
        <dbReference type="HAMAP-Rule" id="MF_01671"/>
    </source>
</evidence>
<comment type="function">
    <text evidence="1">Involved in the oxidation of myo-inositol (MI) to 2-keto-myo-inositol (2KMI or 2-inosose).</text>
</comment>
<comment type="catalytic activity">
    <reaction evidence="1">
        <text>myo-inositol + NAD(+) = scyllo-inosose + NADH + H(+)</text>
        <dbReference type="Rhea" id="RHEA:16949"/>
        <dbReference type="ChEBI" id="CHEBI:15378"/>
        <dbReference type="ChEBI" id="CHEBI:17268"/>
        <dbReference type="ChEBI" id="CHEBI:17811"/>
        <dbReference type="ChEBI" id="CHEBI:57540"/>
        <dbReference type="ChEBI" id="CHEBI:57945"/>
        <dbReference type="EC" id="1.1.1.18"/>
    </reaction>
</comment>
<comment type="subunit">
    <text evidence="1">Homotetramer.</text>
</comment>
<comment type="similarity">
    <text evidence="1">Belongs to the Gfo/Idh/MocA family.</text>
</comment>
<organism>
    <name type="scientific">Saccharopolyspora erythraea (strain ATCC 11635 / DSM 40517 / JCM 4748 / NBRC 13426 / NCIMB 8594 / NRRL 2338)</name>
    <dbReference type="NCBI Taxonomy" id="405948"/>
    <lineage>
        <taxon>Bacteria</taxon>
        <taxon>Bacillati</taxon>
        <taxon>Actinomycetota</taxon>
        <taxon>Actinomycetes</taxon>
        <taxon>Pseudonocardiales</taxon>
        <taxon>Pseudonocardiaceae</taxon>
        <taxon>Saccharopolyspora</taxon>
    </lineage>
</organism>
<reference key="1">
    <citation type="journal article" date="2007" name="Nat. Biotechnol.">
        <title>Complete genome sequence of the erythromycin-producing bacterium Saccharopolyspora erythraea NRRL23338.</title>
        <authorList>
            <person name="Oliynyk M."/>
            <person name="Samborskyy M."/>
            <person name="Lester J.B."/>
            <person name="Mironenko T."/>
            <person name="Scott N."/>
            <person name="Dickens S."/>
            <person name="Haydock S.F."/>
            <person name="Leadlay P.F."/>
        </authorList>
    </citation>
    <scope>NUCLEOTIDE SEQUENCE [LARGE SCALE GENOMIC DNA]</scope>
    <source>
        <strain>ATCC 11635 / DSM 40517 / JCM 4748 / NBRC 13426 / NCIMB 8594 / NRRL 2338</strain>
    </source>
</reference>
<gene>
    <name evidence="1" type="primary">iolG4</name>
    <name type="ordered locus">SACE_5193</name>
</gene>
<sequence>MSNRELRVGLVGAGLMGSDHATRIHRRISGASLVAVGDPDLERAERAAAGIEGCQVETDPLKVIEASDVDAVVLATPGRTHEPLLLAAIERGIPVLCEKPLTPDSKSSLRVVEAEVAAGRRLVQVGFMRRFDPEYAELKRTLHAGALGRPLLMHCAHRNASAPPGFTSQMMIFDSVVHEFDTTRWLLGEEITAVSVRHPRSTANAPSGMTDPQLVTIETASGVLVTVEIFVNCGFGYQVRCEAVCEGGTAQVGGDSGMTTHVRGAWGGSVAPDFRPRFQQAFDEELQRWADAARAGGIDGASAWDGCAAAAACEAGVAAQTSGARTPVQLVERPGLYA</sequence>
<keyword id="KW-0520">NAD</keyword>
<keyword id="KW-0560">Oxidoreductase</keyword>
<keyword id="KW-1185">Reference proteome</keyword>
<dbReference type="EC" id="1.1.1.18" evidence="1"/>
<dbReference type="EMBL" id="AM420293">
    <property type="protein sequence ID" value="CAM04436.1"/>
    <property type="molecule type" value="Genomic_DNA"/>
</dbReference>
<dbReference type="RefSeq" id="WP_009942423.1">
    <property type="nucleotide sequence ID" value="NC_009142.1"/>
</dbReference>
<dbReference type="SMR" id="A4FK61"/>
<dbReference type="STRING" id="405948.SACE_5193"/>
<dbReference type="KEGG" id="sen:SACE_5193"/>
<dbReference type="eggNOG" id="COG0673">
    <property type="taxonomic scope" value="Bacteria"/>
</dbReference>
<dbReference type="HOGENOM" id="CLU_023194_0_1_11"/>
<dbReference type="OrthoDB" id="9815825at2"/>
<dbReference type="Proteomes" id="UP000006728">
    <property type="component" value="Chromosome"/>
</dbReference>
<dbReference type="GO" id="GO:0050112">
    <property type="term" value="F:inositol 2-dehydrogenase (NAD+) activity"/>
    <property type="evidence" value="ECO:0007669"/>
    <property type="project" value="UniProtKB-UniRule"/>
</dbReference>
<dbReference type="GO" id="GO:0000166">
    <property type="term" value="F:nucleotide binding"/>
    <property type="evidence" value="ECO:0007669"/>
    <property type="project" value="InterPro"/>
</dbReference>
<dbReference type="GO" id="GO:0019310">
    <property type="term" value="P:inositol catabolic process"/>
    <property type="evidence" value="ECO:0007669"/>
    <property type="project" value="UniProtKB-UniRule"/>
</dbReference>
<dbReference type="Gene3D" id="3.30.360.10">
    <property type="entry name" value="Dihydrodipicolinate Reductase, domain 2"/>
    <property type="match status" value="1"/>
</dbReference>
<dbReference type="Gene3D" id="3.40.50.720">
    <property type="entry name" value="NAD(P)-binding Rossmann-like Domain"/>
    <property type="match status" value="1"/>
</dbReference>
<dbReference type="HAMAP" id="MF_01671">
    <property type="entry name" value="IolG"/>
    <property type="match status" value="1"/>
</dbReference>
<dbReference type="InterPro" id="IPR050424">
    <property type="entry name" value="Gfo-Idh-MocA_inositol_DH"/>
</dbReference>
<dbReference type="InterPro" id="IPR000683">
    <property type="entry name" value="Gfo/Idh/MocA-like_OxRdtase_N"/>
</dbReference>
<dbReference type="InterPro" id="IPR055170">
    <property type="entry name" value="GFO_IDH_MocA-like_dom"/>
</dbReference>
<dbReference type="InterPro" id="IPR023794">
    <property type="entry name" value="MI/DCI_dehydrogenase"/>
</dbReference>
<dbReference type="InterPro" id="IPR036291">
    <property type="entry name" value="NAD(P)-bd_dom_sf"/>
</dbReference>
<dbReference type="PANTHER" id="PTHR43593">
    <property type="match status" value="1"/>
</dbReference>
<dbReference type="PANTHER" id="PTHR43593:SF1">
    <property type="entry name" value="INOSITOL 2-DEHYDROGENASE"/>
    <property type="match status" value="1"/>
</dbReference>
<dbReference type="Pfam" id="PF01408">
    <property type="entry name" value="GFO_IDH_MocA"/>
    <property type="match status" value="1"/>
</dbReference>
<dbReference type="Pfam" id="PF22725">
    <property type="entry name" value="GFO_IDH_MocA_C3"/>
    <property type="match status" value="1"/>
</dbReference>
<dbReference type="SUPFAM" id="SSF55347">
    <property type="entry name" value="Glyceraldehyde-3-phosphate dehydrogenase-like, C-terminal domain"/>
    <property type="match status" value="1"/>
</dbReference>
<dbReference type="SUPFAM" id="SSF51735">
    <property type="entry name" value="NAD(P)-binding Rossmann-fold domains"/>
    <property type="match status" value="1"/>
</dbReference>